<gene>
    <name evidence="3" type="primary">RLP44</name>
    <name evidence="5" type="ordered locus">At3g49750</name>
    <name evidence="6" type="ORF">T16K5.100</name>
</gene>
<evidence type="ECO:0000255" key="1"/>
<evidence type="ECO:0000255" key="2">
    <source>
        <dbReference type="PROSITE-ProRule" id="PRU00498"/>
    </source>
</evidence>
<evidence type="ECO:0000303" key="3">
    <source>
    </source>
</evidence>
<evidence type="ECO:0000305" key="4"/>
<evidence type="ECO:0000312" key="5">
    <source>
        <dbReference type="Araport" id="AT3G49750"/>
    </source>
</evidence>
<evidence type="ECO:0000312" key="6">
    <source>
        <dbReference type="EMBL" id="CAB66913.1"/>
    </source>
</evidence>
<dbReference type="EMBL" id="AL132965">
    <property type="protein sequence ID" value="CAB66913.1"/>
    <property type="molecule type" value="Genomic_DNA"/>
</dbReference>
<dbReference type="EMBL" id="CP002686">
    <property type="protein sequence ID" value="AEE78586.1"/>
    <property type="molecule type" value="Genomic_DNA"/>
</dbReference>
<dbReference type="EMBL" id="BT006422">
    <property type="protein sequence ID" value="AAP21230.1"/>
    <property type="molecule type" value="mRNA"/>
</dbReference>
<dbReference type="EMBL" id="AK228028">
    <property type="protein sequence ID" value="BAE99989.1"/>
    <property type="molecule type" value="mRNA"/>
</dbReference>
<dbReference type="PIR" id="T46041">
    <property type="entry name" value="T46041"/>
</dbReference>
<dbReference type="RefSeq" id="NP_190544.1">
    <property type="nucleotide sequence ID" value="NM_114835.5"/>
</dbReference>
<dbReference type="SMR" id="Q9M2Y3"/>
<dbReference type="FunCoup" id="Q9M2Y3">
    <property type="interactions" value="388"/>
</dbReference>
<dbReference type="STRING" id="3702.Q9M2Y3"/>
<dbReference type="GlyCosmos" id="Q9M2Y3">
    <property type="glycosylation" value="6 sites, No reported glycans"/>
</dbReference>
<dbReference type="GlyGen" id="Q9M2Y3">
    <property type="glycosylation" value="6 sites"/>
</dbReference>
<dbReference type="PaxDb" id="3702-AT3G49750.1"/>
<dbReference type="ProteomicsDB" id="228114"/>
<dbReference type="EnsemblPlants" id="AT3G49750.1">
    <property type="protein sequence ID" value="AT3G49750.1"/>
    <property type="gene ID" value="AT3G49750"/>
</dbReference>
<dbReference type="GeneID" id="824137"/>
<dbReference type="Gramene" id="AT3G49750.1">
    <property type="protein sequence ID" value="AT3G49750.1"/>
    <property type="gene ID" value="AT3G49750"/>
</dbReference>
<dbReference type="KEGG" id="ath:AT3G49750"/>
<dbReference type="Araport" id="AT3G49750"/>
<dbReference type="TAIR" id="AT3G49750">
    <property type="gene designation" value="RLP44"/>
</dbReference>
<dbReference type="eggNOG" id="KOG0619">
    <property type="taxonomic scope" value="Eukaryota"/>
</dbReference>
<dbReference type="HOGENOM" id="CLU_000288_18_9_1"/>
<dbReference type="InParanoid" id="Q9M2Y3"/>
<dbReference type="PhylomeDB" id="Q9M2Y3"/>
<dbReference type="PRO" id="PR:Q9M2Y3"/>
<dbReference type="Proteomes" id="UP000006548">
    <property type="component" value="Chromosome 3"/>
</dbReference>
<dbReference type="ExpressionAtlas" id="Q9M2Y3">
    <property type="expression patterns" value="baseline and differential"/>
</dbReference>
<dbReference type="GO" id="GO:0005886">
    <property type="term" value="C:plasma membrane"/>
    <property type="evidence" value="ECO:0007005"/>
    <property type="project" value="TAIR"/>
</dbReference>
<dbReference type="FunFam" id="3.80.10.10:FF:000129">
    <property type="entry name" value="Leucine-rich repeat receptor-like kinase"/>
    <property type="match status" value="1"/>
</dbReference>
<dbReference type="FunFam" id="3.80.10.10:FF:000734">
    <property type="entry name" value="Receptor-like protein 44"/>
    <property type="match status" value="1"/>
</dbReference>
<dbReference type="Gene3D" id="3.80.10.10">
    <property type="entry name" value="Ribonuclease Inhibitor"/>
    <property type="match status" value="2"/>
</dbReference>
<dbReference type="InterPro" id="IPR001611">
    <property type="entry name" value="Leu-rich_rpt"/>
</dbReference>
<dbReference type="InterPro" id="IPR032675">
    <property type="entry name" value="LRR_dom_sf"/>
</dbReference>
<dbReference type="InterPro" id="IPR013210">
    <property type="entry name" value="LRR_N_plant-typ"/>
</dbReference>
<dbReference type="InterPro" id="IPR051502">
    <property type="entry name" value="RLP_Defense_Trigger"/>
</dbReference>
<dbReference type="PANTHER" id="PTHR48062">
    <property type="entry name" value="RECEPTOR-LIKE PROTEIN 14"/>
    <property type="match status" value="1"/>
</dbReference>
<dbReference type="PANTHER" id="PTHR48062:SF52">
    <property type="entry name" value="RECEPTOR-LIKE PROTEIN 8-RELATED"/>
    <property type="match status" value="1"/>
</dbReference>
<dbReference type="Pfam" id="PF00560">
    <property type="entry name" value="LRR_1"/>
    <property type="match status" value="2"/>
</dbReference>
<dbReference type="Pfam" id="PF13855">
    <property type="entry name" value="LRR_8"/>
    <property type="match status" value="1"/>
</dbReference>
<dbReference type="Pfam" id="PF08263">
    <property type="entry name" value="LRRNT_2"/>
    <property type="match status" value="1"/>
</dbReference>
<dbReference type="PRINTS" id="PR00019">
    <property type="entry name" value="LEURICHRPT"/>
</dbReference>
<dbReference type="SUPFAM" id="SSF52058">
    <property type="entry name" value="L domain-like"/>
    <property type="match status" value="1"/>
</dbReference>
<dbReference type="PROSITE" id="PS51450">
    <property type="entry name" value="LRR"/>
    <property type="match status" value="4"/>
</dbReference>
<sequence length="274" mass="29993">MTRSHRLLLLLLLIFQTAQRLTTADPNDEACLKNLRQNLEDPASNLRNWTNSVFSNPCSGFTSYLPGATCNNGRIYKLSLTNLSLRGSISPFLSNCTNLQSLDLSSNQISGVIPPEIQYLVNLAVLNLSSNHLSGEITPQLALCAYLNVIDLHDNELSGQIPQQLGLLARLSAFDVSNNKLSGQIPTYLSNRTGNFPRFNASSFIGNKGLYGYPLQEMMMKSKGLSVMAIVGIGLGSGIASLMISFTGVCLWLRITEKKIVEEEGKISQSMPDY</sequence>
<feature type="signal peptide" evidence="1">
    <location>
        <begin position="1"/>
        <end position="24"/>
    </location>
</feature>
<feature type="chain" id="PRO_5014108258" description="Receptor-like protein 44">
    <location>
        <begin position="25"/>
        <end position="274"/>
    </location>
</feature>
<feature type="topological domain" description="Extracellular" evidence="1">
    <location>
        <begin position="25"/>
        <end position="223"/>
    </location>
</feature>
<feature type="transmembrane region" description="Helical" evidence="1">
    <location>
        <begin position="224"/>
        <end position="244"/>
    </location>
</feature>
<feature type="topological domain" description="Cytoplasmic" evidence="1">
    <location>
        <begin position="245"/>
        <end position="274"/>
    </location>
</feature>
<feature type="repeat" description="LRR 1" evidence="1">
    <location>
        <begin position="96"/>
        <end position="121"/>
    </location>
</feature>
<feature type="repeat" description="LRR 2" evidence="1">
    <location>
        <begin position="123"/>
        <end position="144"/>
    </location>
</feature>
<feature type="repeat" description="LRR 3" evidence="1">
    <location>
        <begin position="145"/>
        <end position="168"/>
    </location>
</feature>
<feature type="repeat" description="LRR 4" evidence="1">
    <location>
        <begin position="169"/>
        <end position="192"/>
    </location>
</feature>
<feature type="glycosylation site" description="N-linked (GlcNAc...) asparagine" evidence="2">
    <location>
        <position position="48"/>
    </location>
</feature>
<feature type="glycosylation site" description="N-linked (GlcNAc...) asparagine" evidence="2">
    <location>
        <position position="82"/>
    </location>
</feature>
<feature type="glycosylation site" description="N-linked (GlcNAc...) asparagine" evidence="2">
    <location>
        <position position="95"/>
    </location>
</feature>
<feature type="glycosylation site" description="N-linked (GlcNAc...) asparagine" evidence="2">
    <location>
        <position position="127"/>
    </location>
</feature>
<feature type="glycosylation site" description="N-linked (GlcNAc...) asparagine" evidence="2">
    <location>
        <position position="191"/>
    </location>
</feature>
<feature type="glycosylation site" description="N-linked (GlcNAc...) asparagine" evidence="2">
    <location>
        <position position="200"/>
    </location>
</feature>
<comment type="subcellular location">
    <subcellularLocation>
        <location evidence="4">Cell membrane</location>
        <topology evidence="4">Single-pass type I membrane protein</topology>
    </subcellularLocation>
</comment>
<comment type="similarity">
    <text evidence="4">Belongs to the RLP family.</text>
</comment>
<reference key="1">
    <citation type="journal article" date="2000" name="Nature">
        <title>Sequence and analysis of chromosome 3 of the plant Arabidopsis thaliana.</title>
        <authorList>
            <person name="Salanoubat M."/>
            <person name="Lemcke K."/>
            <person name="Rieger M."/>
            <person name="Ansorge W."/>
            <person name="Unseld M."/>
            <person name="Fartmann B."/>
            <person name="Valle G."/>
            <person name="Bloecker H."/>
            <person name="Perez-Alonso M."/>
            <person name="Obermaier B."/>
            <person name="Delseny M."/>
            <person name="Boutry M."/>
            <person name="Grivell L.A."/>
            <person name="Mache R."/>
            <person name="Puigdomenech P."/>
            <person name="De Simone V."/>
            <person name="Choisne N."/>
            <person name="Artiguenave F."/>
            <person name="Robert C."/>
            <person name="Brottier P."/>
            <person name="Wincker P."/>
            <person name="Cattolico L."/>
            <person name="Weissenbach J."/>
            <person name="Saurin W."/>
            <person name="Quetier F."/>
            <person name="Schaefer M."/>
            <person name="Mueller-Auer S."/>
            <person name="Gabel C."/>
            <person name="Fuchs M."/>
            <person name="Benes V."/>
            <person name="Wurmbach E."/>
            <person name="Drzonek H."/>
            <person name="Erfle H."/>
            <person name="Jordan N."/>
            <person name="Bangert S."/>
            <person name="Wiedelmann R."/>
            <person name="Kranz H."/>
            <person name="Voss H."/>
            <person name="Holland R."/>
            <person name="Brandt P."/>
            <person name="Nyakatura G."/>
            <person name="Vezzi A."/>
            <person name="D'Angelo M."/>
            <person name="Pallavicini A."/>
            <person name="Toppo S."/>
            <person name="Simionati B."/>
            <person name="Conrad A."/>
            <person name="Hornischer K."/>
            <person name="Kauer G."/>
            <person name="Loehnert T.-H."/>
            <person name="Nordsiek G."/>
            <person name="Reichelt J."/>
            <person name="Scharfe M."/>
            <person name="Schoen O."/>
            <person name="Bargues M."/>
            <person name="Terol J."/>
            <person name="Climent J."/>
            <person name="Navarro P."/>
            <person name="Collado C."/>
            <person name="Perez-Perez A."/>
            <person name="Ottenwaelder B."/>
            <person name="Duchemin D."/>
            <person name="Cooke R."/>
            <person name="Laudie M."/>
            <person name="Berger-Llauro C."/>
            <person name="Purnelle B."/>
            <person name="Masuy D."/>
            <person name="de Haan M."/>
            <person name="Maarse A.C."/>
            <person name="Alcaraz J.-P."/>
            <person name="Cottet A."/>
            <person name="Casacuberta E."/>
            <person name="Monfort A."/>
            <person name="Argiriou A."/>
            <person name="Flores M."/>
            <person name="Liguori R."/>
            <person name="Vitale D."/>
            <person name="Mannhaupt G."/>
            <person name="Haase D."/>
            <person name="Schoof H."/>
            <person name="Rudd S."/>
            <person name="Zaccaria P."/>
            <person name="Mewes H.-W."/>
            <person name="Mayer K.F.X."/>
            <person name="Kaul S."/>
            <person name="Town C.D."/>
            <person name="Koo H.L."/>
            <person name="Tallon L.J."/>
            <person name="Jenkins J."/>
            <person name="Rooney T."/>
            <person name="Rizzo M."/>
            <person name="Walts A."/>
            <person name="Utterback T."/>
            <person name="Fujii C.Y."/>
            <person name="Shea T.P."/>
            <person name="Creasy T.H."/>
            <person name="Haas B."/>
            <person name="Maiti R."/>
            <person name="Wu D."/>
            <person name="Peterson J."/>
            <person name="Van Aken S."/>
            <person name="Pai G."/>
            <person name="Militscher J."/>
            <person name="Sellers P."/>
            <person name="Gill J.E."/>
            <person name="Feldblyum T.V."/>
            <person name="Preuss D."/>
            <person name="Lin X."/>
            <person name="Nierman W.C."/>
            <person name="Salzberg S.L."/>
            <person name="White O."/>
            <person name="Venter J.C."/>
            <person name="Fraser C.M."/>
            <person name="Kaneko T."/>
            <person name="Nakamura Y."/>
            <person name="Sato S."/>
            <person name="Kato T."/>
            <person name="Asamizu E."/>
            <person name="Sasamoto S."/>
            <person name="Kimura T."/>
            <person name="Idesawa K."/>
            <person name="Kawashima K."/>
            <person name="Kishida Y."/>
            <person name="Kiyokawa C."/>
            <person name="Kohara M."/>
            <person name="Matsumoto M."/>
            <person name="Matsuno A."/>
            <person name="Muraki A."/>
            <person name="Nakayama S."/>
            <person name="Nakazaki N."/>
            <person name="Shinpo S."/>
            <person name="Takeuchi C."/>
            <person name="Wada T."/>
            <person name="Watanabe A."/>
            <person name="Yamada M."/>
            <person name="Yasuda M."/>
            <person name="Tabata S."/>
        </authorList>
    </citation>
    <scope>NUCLEOTIDE SEQUENCE [LARGE SCALE GENOMIC DNA]</scope>
    <source>
        <strain>cv. Columbia</strain>
    </source>
</reference>
<reference key="2">
    <citation type="journal article" date="2017" name="Plant J.">
        <title>Araport11: a complete reannotation of the Arabidopsis thaliana reference genome.</title>
        <authorList>
            <person name="Cheng C.Y."/>
            <person name="Krishnakumar V."/>
            <person name="Chan A.P."/>
            <person name="Thibaud-Nissen F."/>
            <person name="Schobel S."/>
            <person name="Town C.D."/>
        </authorList>
    </citation>
    <scope>GENOME REANNOTATION</scope>
    <source>
        <strain>cv. Columbia</strain>
    </source>
</reference>
<reference key="3">
    <citation type="journal article" date="2003" name="Science">
        <title>Empirical analysis of transcriptional activity in the Arabidopsis genome.</title>
        <authorList>
            <person name="Yamada K."/>
            <person name="Lim J."/>
            <person name="Dale J.M."/>
            <person name="Chen H."/>
            <person name="Shinn P."/>
            <person name="Palm C.J."/>
            <person name="Southwick A.M."/>
            <person name="Wu H.C."/>
            <person name="Kim C.J."/>
            <person name="Nguyen M."/>
            <person name="Pham P.K."/>
            <person name="Cheuk R.F."/>
            <person name="Karlin-Newmann G."/>
            <person name="Liu S.X."/>
            <person name="Lam B."/>
            <person name="Sakano H."/>
            <person name="Wu T."/>
            <person name="Yu G."/>
            <person name="Miranda M."/>
            <person name="Quach H.L."/>
            <person name="Tripp M."/>
            <person name="Chang C.H."/>
            <person name="Lee J.M."/>
            <person name="Toriumi M.J."/>
            <person name="Chan M.M."/>
            <person name="Tang C.C."/>
            <person name="Onodera C.S."/>
            <person name="Deng J.M."/>
            <person name="Akiyama K."/>
            <person name="Ansari Y."/>
            <person name="Arakawa T."/>
            <person name="Banh J."/>
            <person name="Banno F."/>
            <person name="Bowser L."/>
            <person name="Brooks S.Y."/>
            <person name="Carninci P."/>
            <person name="Chao Q."/>
            <person name="Choy N."/>
            <person name="Enju A."/>
            <person name="Goldsmith A.D."/>
            <person name="Gurjal M."/>
            <person name="Hansen N.F."/>
            <person name="Hayashizaki Y."/>
            <person name="Johnson-Hopson C."/>
            <person name="Hsuan V.W."/>
            <person name="Iida K."/>
            <person name="Karnes M."/>
            <person name="Khan S."/>
            <person name="Koesema E."/>
            <person name="Ishida J."/>
            <person name="Jiang P.X."/>
            <person name="Jones T."/>
            <person name="Kawai J."/>
            <person name="Kamiya A."/>
            <person name="Meyers C."/>
            <person name="Nakajima M."/>
            <person name="Narusaka M."/>
            <person name="Seki M."/>
            <person name="Sakurai T."/>
            <person name="Satou M."/>
            <person name="Tamse R."/>
            <person name="Vaysberg M."/>
            <person name="Wallender E.K."/>
            <person name="Wong C."/>
            <person name="Yamamura Y."/>
            <person name="Yuan S."/>
            <person name="Shinozaki K."/>
            <person name="Davis R.W."/>
            <person name="Theologis A."/>
            <person name="Ecker J.R."/>
        </authorList>
    </citation>
    <scope>NUCLEOTIDE SEQUENCE [LARGE SCALE MRNA]</scope>
    <source>
        <strain>cv. Columbia</strain>
    </source>
</reference>
<reference key="4">
    <citation type="submission" date="2006-07" db="EMBL/GenBank/DDBJ databases">
        <title>Large-scale analysis of RIKEN Arabidopsis full-length (RAFL) cDNAs.</title>
        <authorList>
            <person name="Totoki Y."/>
            <person name="Seki M."/>
            <person name="Ishida J."/>
            <person name="Nakajima M."/>
            <person name="Enju A."/>
            <person name="Kamiya A."/>
            <person name="Narusaka M."/>
            <person name="Shin-i T."/>
            <person name="Nakagawa M."/>
            <person name="Sakamoto N."/>
            <person name="Oishi K."/>
            <person name="Kohara Y."/>
            <person name="Kobayashi M."/>
            <person name="Toyoda A."/>
            <person name="Sakaki Y."/>
            <person name="Sakurai T."/>
            <person name="Iida K."/>
            <person name="Akiyama K."/>
            <person name="Satou M."/>
            <person name="Toyoda T."/>
            <person name="Konagaya A."/>
            <person name="Carninci P."/>
            <person name="Kawai J."/>
            <person name="Hayashizaki Y."/>
            <person name="Shinozaki K."/>
        </authorList>
    </citation>
    <scope>NUCLEOTIDE SEQUENCE [LARGE SCALE MRNA]</scope>
    <source>
        <strain>cv. Columbia</strain>
    </source>
</reference>
<reference key="5">
    <citation type="journal article" date="2005" name="Plant Physiol.">
        <title>Phylogenomic analysis of the receptor-like proteins of rice and Arabidopsis.</title>
        <authorList>
            <person name="Fritz-Laylin L.K."/>
            <person name="Krishnamurthy N."/>
            <person name="Toer M."/>
            <person name="Sjoelander K.V."/>
            <person name="Jones J.D."/>
        </authorList>
    </citation>
    <scope>GENE FAMILY</scope>
</reference>
<reference key="6">
    <citation type="journal article" date="2008" name="Plant Physiol.">
        <title>A genome-wide functional investigation into the roles of receptor-like proteins in Arabidopsis.</title>
        <authorList>
            <person name="Wang G."/>
            <person name="Ellendorff U."/>
            <person name="Kemp B."/>
            <person name="Mansfield J.W."/>
            <person name="Forsyth A."/>
            <person name="Mitchell K."/>
            <person name="Bastas K."/>
            <person name="Liu C.-M."/>
            <person name="Woods-Toer A."/>
            <person name="Zipfel C."/>
            <person name="de Wit P.J.G.M."/>
            <person name="Jones J.D.G."/>
            <person name="Toer M."/>
            <person name="Thomma B.P.H.J."/>
        </authorList>
    </citation>
    <scope>GENE FAMILY</scope>
    <scope>NOMENCLATURE</scope>
    <source>
        <strain>cv. Columbia</strain>
    </source>
</reference>
<protein>
    <recommendedName>
        <fullName evidence="3">Receptor-like protein 44</fullName>
        <shortName evidence="3">AtRLP44</shortName>
    </recommendedName>
</protein>
<proteinExistence type="evidence at transcript level"/>
<name>RLP44_ARATH</name>
<keyword id="KW-1003">Cell membrane</keyword>
<keyword id="KW-0325">Glycoprotein</keyword>
<keyword id="KW-0433">Leucine-rich repeat</keyword>
<keyword id="KW-0472">Membrane</keyword>
<keyword id="KW-0675">Receptor</keyword>
<keyword id="KW-1185">Reference proteome</keyword>
<keyword id="KW-0677">Repeat</keyword>
<keyword id="KW-0732">Signal</keyword>
<keyword id="KW-0812">Transmembrane</keyword>
<keyword id="KW-1133">Transmembrane helix</keyword>
<organism>
    <name type="scientific">Arabidopsis thaliana</name>
    <name type="common">Mouse-ear cress</name>
    <dbReference type="NCBI Taxonomy" id="3702"/>
    <lineage>
        <taxon>Eukaryota</taxon>
        <taxon>Viridiplantae</taxon>
        <taxon>Streptophyta</taxon>
        <taxon>Embryophyta</taxon>
        <taxon>Tracheophyta</taxon>
        <taxon>Spermatophyta</taxon>
        <taxon>Magnoliopsida</taxon>
        <taxon>eudicotyledons</taxon>
        <taxon>Gunneridae</taxon>
        <taxon>Pentapetalae</taxon>
        <taxon>rosids</taxon>
        <taxon>malvids</taxon>
        <taxon>Brassicales</taxon>
        <taxon>Brassicaceae</taxon>
        <taxon>Camelineae</taxon>
        <taxon>Arabidopsis</taxon>
    </lineage>
</organism>
<accession>Q9M2Y3</accession>